<evidence type="ECO:0000250" key="1">
    <source>
        <dbReference type="UniProtKB" id="P75028"/>
    </source>
</evidence>
<evidence type="ECO:0000255" key="2"/>
<evidence type="ECO:0000269" key="3">
    <source>
    </source>
</evidence>
<evidence type="ECO:0000303" key="4">
    <source>
    </source>
</evidence>
<evidence type="ECO:0000305" key="5"/>
<feature type="chain" id="PRO_0000216667" description="PxcA-like protein">
    <location>
        <begin position="1"/>
        <end position="393"/>
    </location>
</feature>
<feature type="transmembrane region" description="Helical" evidence="2">
    <location>
        <begin position="173"/>
        <end position="193"/>
    </location>
</feature>
<feature type="transmembrane region" description="Helical" evidence="2">
    <location>
        <begin position="271"/>
        <end position="291"/>
    </location>
</feature>
<feature type="transmembrane region" description="Helical" evidence="2">
    <location>
        <begin position="306"/>
        <end position="326"/>
    </location>
</feature>
<feature type="transmembrane region" description="Helical" evidence="2">
    <location>
        <begin position="354"/>
        <end position="374"/>
    </location>
</feature>
<feature type="sequence conflict" description="In Ref. 1; CAA65417." evidence="5" ref="1">
    <original>DG</original>
    <variation>GR</variation>
    <location>
        <begin position="45"/>
        <end position="46"/>
    </location>
</feature>
<feature type="sequence conflict" description="In Ref. 1; CAA65417." evidence="5" ref="1">
    <original>S</original>
    <variation>G</variation>
    <location>
        <position position="139"/>
    </location>
</feature>
<feature type="sequence conflict" description="In Ref. 1; CAA65417." evidence="5" ref="1">
    <original>A</original>
    <variation>G</variation>
    <location>
        <position position="194"/>
    </location>
</feature>
<protein>
    <recommendedName>
        <fullName evidence="4">PxcA-like protein</fullName>
        <shortName evidence="4">PxcL</shortName>
    </recommendedName>
    <alternativeName>
        <fullName>CemA-like protein sll1685</fullName>
    </alternativeName>
    <alternativeName>
        <fullName evidence="5">Proton extrusion protein PxcL</fullName>
    </alternativeName>
</protein>
<comment type="function">
    <text evidence="1 3">Together with PxcA, contributes to transient H(+) uptake following dark to light transition (PubMed:32619428). Required for H(+) influx to activate the Calvin-Benson-Bassham cycle (PubMed:32619428). May also be involved in CO(2) transport (By similarity).</text>
</comment>
<comment type="subcellular location">
    <subcellularLocation>
        <location evidence="1">Cell inner membrane</location>
        <topology evidence="2">Multi-pass membrane protein</topology>
    </subcellularLocation>
</comment>
<comment type="disruption phenotype">
    <text evidence="3">Reduced H(+) influx activity following dark to light transition leading to a delayed transition from H(+) extrusion to H(+) uptake (PubMed:32619428). The double mutant missing both PxcA and PxcL is impaired for light-induced H(+) extrusion and later exhibits lower H(+) uptake activity (PubMed:32619428). The double mutant missing both PxcL and FlpA has both reduced light-induced H(+) extrusion and later lower H(+) uptake activity (PubMed:32619428).</text>
</comment>
<comment type="similarity">
    <text evidence="5">Belongs to the CemA family. PxcL subfamily.</text>
</comment>
<name>PXCL_SYNY3</name>
<sequence>MLPDKKLGSPNHRFHHWLVRQAIAALDNAQVSAQAIESIEKTYFDGGKIAPDSQRGVNTYNYFKSTLERELLKIKFNLARFNATNLLNNSEDFQITEAEIIVKLDAIEKIIAKYRFSEDLVEVDSQSSAEINNISPKRSNFFNIQRDLSAQDEQKILQNLRNLRLQRRIATRFLIVLIFIPLTVQILTKNLVFAPLVQHFRVDIVAWEKIHYQEETIEHYFEEFARYKETLEIKQLLSENQPLNQEKIHQELKKKAEELIRQAATNSQQGIVNLLADIAGLVAFVVLIIVFRGKSIITQQYLSQSFLALNDITKVFIFILLTDMFVGFHSAHGWEVVLENLTSHFGLPENRHAVYIFIATVPVFLDSLFKLLIFNYFTRQSPTSVAILEKMQQ</sequence>
<keyword id="KW-0997">Cell inner membrane</keyword>
<keyword id="KW-1003">Cell membrane</keyword>
<keyword id="KW-0375">Hydrogen ion transport</keyword>
<keyword id="KW-0406">Ion transport</keyword>
<keyword id="KW-0472">Membrane</keyword>
<keyword id="KW-1185">Reference proteome</keyword>
<keyword id="KW-0812">Transmembrane</keyword>
<keyword id="KW-1133">Transmembrane helix</keyword>
<keyword id="KW-0813">Transport</keyword>
<reference key="1">
    <citation type="journal article" date="1996" name="J. Biol. Chem.">
        <title>Expression of the chlI, chlD, and chlH genes from the Cyanobacterium synechocystis PCC6803 in Escherichia coli and demonstration that the three cognate proteins are required for magnesium-protoporphyrin chelatase activity.</title>
        <authorList>
            <person name="Jensen P.E."/>
            <person name="Gibson L.C.D."/>
            <person name="Henningsen K.W."/>
            <person name="Hunter C.N."/>
        </authorList>
    </citation>
    <scope>NUCLEOTIDE SEQUENCE [GENOMIC DNA]</scope>
</reference>
<reference key="2">
    <citation type="journal article" date="1996" name="DNA Res.">
        <title>Sequence analysis of the genome of the unicellular cyanobacterium Synechocystis sp. strain PCC6803. II. Sequence determination of the entire genome and assignment of potential protein-coding regions.</title>
        <authorList>
            <person name="Kaneko T."/>
            <person name="Sato S."/>
            <person name="Kotani H."/>
            <person name="Tanaka A."/>
            <person name="Asamizu E."/>
            <person name="Nakamura Y."/>
            <person name="Miyajima N."/>
            <person name="Hirosawa M."/>
            <person name="Sugiura M."/>
            <person name="Sasamoto S."/>
            <person name="Kimura T."/>
            <person name="Hosouchi T."/>
            <person name="Matsuno A."/>
            <person name="Muraki A."/>
            <person name="Nakazaki N."/>
            <person name="Naruo K."/>
            <person name="Okumura S."/>
            <person name="Shimpo S."/>
            <person name="Takeuchi C."/>
            <person name="Wada T."/>
            <person name="Watanabe A."/>
            <person name="Yamada M."/>
            <person name="Yasuda M."/>
            <person name="Tabata S."/>
        </authorList>
    </citation>
    <scope>NUCLEOTIDE SEQUENCE [LARGE SCALE GENOMIC DNA]</scope>
    <source>
        <strain>ATCC 27184 / PCC 6803 / Kazusa</strain>
    </source>
</reference>
<reference key="3">
    <citation type="journal article" date="2020" name="Biochim. Biophys. Acta">
        <title>Regulation of light-induced H+ extrusion and uptake by cyanobacterial homologs of the plastidial FLAP1, DLDG1, and Ycf10 in Synechocystis sp. PCC6803.</title>
        <authorList>
            <person name="Inago H."/>
            <person name="Sato R."/>
            <person name="Masuda S."/>
        </authorList>
    </citation>
    <scope>FUNCTION</scope>
    <scope>DISRUPTION PHENOTYPE</scope>
    <source>
        <strain>ATCC 27184 / PCC 6803 / Kazusa</strain>
    </source>
</reference>
<gene>
    <name evidence="4" type="primary">pxcL</name>
    <name evidence="4" type="ordered locus">sll1685</name>
</gene>
<accession>P72771</accession>
<accession>Q55099</accession>
<organism>
    <name type="scientific">Synechocystis sp. (strain ATCC 27184 / PCC 6803 / Kazusa)</name>
    <dbReference type="NCBI Taxonomy" id="1111708"/>
    <lineage>
        <taxon>Bacteria</taxon>
        <taxon>Bacillati</taxon>
        <taxon>Cyanobacteriota</taxon>
        <taxon>Cyanophyceae</taxon>
        <taxon>Synechococcales</taxon>
        <taxon>Merismopediaceae</taxon>
        <taxon>Synechocystis</taxon>
    </lineage>
</organism>
<dbReference type="EMBL" id="X96599">
    <property type="protein sequence ID" value="CAA65417.1"/>
    <property type="molecule type" value="Genomic_DNA"/>
</dbReference>
<dbReference type="EMBL" id="BA000022">
    <property type="protein sequence ID" value="BAA16786.1"/>
    <property type="molecule type" value="Genomic_DNA"/>
</dbReference>
<dbReference type="PIR" id="S74634">
    <property type="entry name" value="S74634"/>
</dbReference>
<dbReference type="PIR" id="T46869">
    <property type="entry name" value="T46869"/>
</dbReference>
<dbReference type="SMR" id="P72771"/>
<dbReference type="IntAct" id="P72771">
    <property type="interactions" value="2"/>
</dbReference>
<dbReference type="STRING" id="1148.gene:10497642"/>
<dbReference type="PaxDb" id="1148-1651859"/>
<dbReference type="EnsemblBacteria" id="BAA16786">
    <property type="protein sequence ID" value="BAA16786"/>
    <property type="gene ID" value="BAA16786"/>
</dbReference>
<dbReference type="KEGG" id="syn:sll1685"/>
<dbReference type="eggNOG" id="ENOG502Z8DN">
    <property type="taxonomic scope" value="Bacteria"/>
</dbReference>
<dbReference type="InParanoid" id="P72771"/>
<dbReference type="PhylomeDB" id="P72771"/>
<dbReference type="Proteomes" id="UP000001425">
    <property type="component" value="Chromosome"/>
</dbReference>
<dbReference type="GO" id="GO:0005886">
    <property type="term" value="C:plasma membrane"/>
    <property type="evidence" value="ECO:0007669"/>
    <property type="project" value="UniProtKB-SubCell"/>
</dbReference>
<dbReference type="GO" id="GO:0015078">
    <property type="term" value="F:proton transmembrane transporter activity"/>
    <property type="evidence" value="ECO:0007669"/>
    <property type="project" value="UniProtKB-UniRule"/>
</dbReference>
<dbReference type="InterPro" id="IPR004282">
    <property type="entry name" value="CemA"/>
</dbReference>
<dbReference type="NCBIfam" id="NF002704">
    <property type="entry name" value="PRK02507.1-2"/>
    <property type="match status" value="1"/>
</dbReference>
<dbReference type="PANTHER" id="PTHR33650:SF2">
    <property type="entry name" value="CHLOROPLAST ENVELOPE MEMBRANE PROTEIN"/>
    <property type="match status" value="1"/>
</dbReference>
<dbReference type="PANTHER" id="PTHR33650">
    <property type="entry name" value="CHLOROPLAST ENVELOPE MEMBRANE PROTEIN-RELATED"/>
    <property type="match status" value="1"/>
</dbReference>
<dbReference type="Pfam" id="PF03040">
    <property type="entry name" value="CemA"/>
    <property type="match status" value="1"/>
</dbReference>
<proteinExistence type="inferred from homology"/>